<name>PSBN_HOOLU</name>
<geneLocation type="chloroplast"/>
<reference key="1">
    <citation type="submission" date="2002-05" db="EMBL/GenBank/DDBJ databases">
        <title>Evolution of the Meteoriaceae.</title>
        <authorList>
            <person name="Quandt D."/>
        </authorList>
    </citation>
    <scope>NUCLEOTIDE SEQUENCE [GENOMIC DNA]</scope>
</reference>
<accession>Q7YN52</accession>
<keyword id="KW-0150">Chloroplast</keyword>
<keyword id="KW-0472">Membrane</keyword>
<keyword id="KW-0934">Plastid</keyword>
<keyword id="KW-0793">Thylakoid</keyword>
<keyword id="KW-0812">Transmembrane</keyword>
<keyword id="KW-1133">Transmembrane helix</keyword>
<proteinExistence type="inferred from homology"/>
<dbReference type="EMBL" id="AF509935">
    <property type="protein sequence ID" value="AAP46323.1"/>
    <property type="molecule type" value="Genomic_DNA"/>
</dbReference>
<dbReference type="SMR" id="Q7YN52"/>
<dbReference type="GO" id="GO:0009535">
    <property type="term" value="C:chloroplast thylakoid membrane"/>
    <property type="evidence" value="ECO:0007669"/>
    <property type="project" value="UniProtKB-SubCell"/>
</dbReference>
<dbReference type="GO" id="GO:0015979">
    <property type="term" value="P:photosynthesis"/>
    <property type="evidence" value="ECO:0007669"/>
    <property type="project" value="InterPro"/>
</dbReference>
<dbReference type="HAMAP" id="MF_00293">
    <property type="entry name" value="PSII_PsbN"/>
    <property type="match status" value="1"/>
</dbReference>
<dbReference type="InterPro" id="IPR003398">
    <property type="entry name" value="PSII_PsbN"/>
</dbReference>
<dbReference type="PANTHER" id="PTHR35326">
    <property type="entry name" value="PROTEIN PSBN"/>
    <property type="match status" value="1"/>
</dbReference>
<dbReference type="PANTHER" id="PTHR35326:SF3">
    <property type="entry name" value="PROTEIN PSBN"/>
    <property type="match status" value="1"/>
</dbReference>
<dbReference type="Pfam" id="PF02468">
    <property type="entry name" value="PsbN"/>
    <property type="match status" value="1"/>
</dbReference>
<organism>
    <name type="scientific">Hookeria lucens</name>
    <name type="common">Moss</name>
    <name type="synonym">Hypnum lucens</name>
    <dbReference type="NCBI Taxonomy" id="65539"/>
    <lineage>
        <taxon>Eukaryota</taxon>
        <taxon>Viridiplantae</taxon>
        <taxon>Streptophyta</taxon>
        <taxon>Embryophyta</taxon>
        <taxon>Bryophyta</taxon>
        <taxon>Bryophytina</taxon>
        <taxon>Bryopsida</taxon>
        <taxon>Bryidae</taxon>
        <taxon>Hypnanae</taxon>
        <taxon>Hookeriales</taxon>
        <taxon>Hookeriaceae</taxon>
        <taxon>Hookeria</taxon>
    </lineage>
</organism>
<feature type="chain" id="PRO_0000207905" description="Protein PsbN">
    <location>
        <begin position="1"/>
        <end position="43"/>
    </location>
</feature>
<feature type="transmembrane region" description="Helical" evidence="1">
    <location>
        <begin position="5"/>
        <end position="27"/>
    </location>
</feature>
<sequence length="43" mass="4815">METATLVAIFISCSLVSFTGYALYTAFGQPSKELRDPFEEHED</sequence>
<evidence type="ECO:0000255" key="1">
    <source>
        <dbReference type="HAMAP-Rule" id="MF_00293"/>
    </source>
</evidence>
<protein>
    <recommendedName>
        <fullName evidence="1">Protein PsbN</fullName>
    </recommendedName>
</protein>
<gene>
    <name evidence="1" type="primary">psbN</name>
</gene>
<comment type="function">
    <text evidence="1">May play a role in photosystem I and II biogenesis.</text>
</comment>
<comment type="subcellular location">
    <subcellularLocation>
        <location evidence="1">Plastid</location>
        <location evidence="1">Chloroplast thylakoid membrane</location>
        <topology evidence="1">Single-pass membrane protein</topology>
    </subcellularLocation>
</comment>
<comment type="similarity">
    <text evidence="1">Belongs to the PsbN family.</text>
</comment>
<comment type="caution">
    <text evidence="1">Originally thought to be a component of PSII; based on experiments in Synechocystis, N.tabacum and barley, and its absence from PSII in T.elongatus and T.vulcanus, this is probably not true.</text>
</comment>